<feature type="chain" id="PRO_0000132196" description="Small ribosomal subunit protein uS13c">
    <location>
        <begin position="1"/>
        <end position="123"/>
    </location>
</feature>
<feature type="region of interest" description="Disordered" evidence="2">
    <location>
        <begin position="99"/>
        <end position="123"/>
    </location>
</feature>
<feature type="compositionally biased region" description="Basic residues" evidence="2">
    <location>
        <begin position="100"/>
        <end position="123"/>
    </location>
</feature>
<comment type="function">
    <text evidence="1">Located at the top of the head of the 30S subunit, it contacts several helices of the 16S rRNA.</text>
</comment>
<comment type="subunit">
    <text>Part of the 30S ribosomal subunit.</text>
</comment>
<comment type="subcellular location">
    <subcellularLocation>
        <location>Plastid</location>
        <location>Chloroplast</location>
    </subcellularLocation>
</comment>
<comment type="similarity">
    <text evidence="1">Belongs to the universal ribosomal protein uS13 family.</text>
</comment>
<organism>
    <name type="scientific">Cyanidioschyzon merolae (strain NIES-3377 / 10D)</name>
    <name type="common">Unicellular red alga</name>
    <dbReference type="NCBI Taxonomy" id="280699"/>
    <lineage>
        <taxon>Eukaryota</taxon>
        <taxon>Rhodophyta</taxon>
        <taxon>Bangiophyceae</taxon>
        <taxon>Cyanidiales</taxon>
        <taxon>Cyanidiaceae</taxon>
        <taxon>Cyanidioschyzon</taxon>
    </lineage>
</organism>
<sequence>MRIAGVDLPSQKKLEVALTYLYGIGKTLAKEILEACQLSPDLRVRDVNDEQSMRLRQYIEQKYLIESDLKRVESMNIKRLMDIGCYRGRRHRALLPVRGQRTRSNARTRRGAKKTVAGKKLAK</sequence>
<reference key="1">
    <citation type="journal article" date="2003" name="DNA Res.">
        <title>Complete sequence and analysis of the plastid genome of the unicellular red alga Cyanidioschyzon merolae.</title>
        <authorList>
            <person name="Ohta N."/>
            <person name="Matsuzaki M."/>
            <person name="Misumi O."/>
            <person name="Miyagishima S.-Y."/>
            <person name="Nozaki H."/>
            <person name="Tanaka K."/>
            <person name="Shin-i T."/>
            <person name="Kohara Y."/>
            <person name="Kuroiwa T."/>
        </authorList>
    </citation>
    <scope>NUCLEOTIDE SEQUENCE [LARGE SCALE GENOMIC DNA]</scope>
    <source>
        <strain>NIES-3377 / 10D</strain>
    </source>
</reference>
<dbReference type="EMBL" id="AB002583">
    <property type="protein sequence ID" value="BAC76250.1"/>
    <property type="molecule type" value="Genomic_DNA"/>
</dbReference>
<dbReference type="RefSeq" id="NP_849088.1">
    <property type="nucleotide sequence ID" value="NC_004799.1"/>
</dbReference>
<dbReference type="SMR" id="P59758"/>
<dbReference type="STRING" id="280699.P59758"/>
<dbReference type="EnsemblPlants" id="CMV183CT">
    <property type="protein sequence ID" value="CMV183CT"/>
    <property type="gene ID" value="CMV183C"/>
</dbReference>
<dbReference type="GeneID" id="845002"/>
<dbReference type="Gramene" id="CMV183CT">
    <property type="protein sequence ID" value="CMV183CT"/>
    <property type="gene ID" value="CMV183C"/>
</dbReference>
<dbReference type="KEGG" id="cme:CymeCp156"/>
<dbReference type="eggNOG" id="KOG3311">
    <property type="taxonomic scope" value="Eukaryota"/>
</dbReference>
<dbReference type="HOGENOM" id="CLU_103849_1_2_1"/>
<dbReference type="Proteomes" id="UP000007014">
    <property type="component" value="Chloroplast"/>
</dbReference>
<dbReference type="GO" id="GO:0009507">
    <property type="term" value="C:chloroplast"/>
    <property type="evidence" value="ECO:0007669"/>
    <property type="project" value="UniProtKB-SubCell"/>
</dbReference>
<dbReference type="GO" id="GO:0005829">
    <property type="term" value="C:cytosol"/>
    <property type="evidence" value="ECO:0007669"/>
    <property type="project" value="TreeGrafter"/>
</dbReference>
<dbReference type="GO" id="GO:0015935">
    <property type="term" value="C:small ribosomal subunit"/>
    <property type="evidence" value="ECO:0007669"/>
    <property type="project" value="TreeGrafter"/>
</dbReference>
<dbReference type="GO" id="GO:0019843">
    <property type="term" value="F:rRNA binding"/>
    <property type="evidence" value="ECO:0007669"/>
    <property type="project" value="UniProtKB-UniRule"/>
</dbReference>
<dbReference type="GO" id="GO:0003735">
    <property type="term" value="F:structural constituent of ribosome"/>
    <property type="evidence" value="ECO:0007669"/>
    <property type="project" value="InterPro"/>
</dbReference>
<dbReference type="GO" id="GO:0006412">
    <property type="term" value="P:translation"/>
    <property type="evidence" value="ECO:0007669"/>
    <property type="project" value="UniProtKB-UniRule"/>
</dbReference>
<dbReference type="FunFam" id="1.10.8.50:FF:000001">
    <property type="entry name" value="30S ribosomal protein S13"/>
    <property type="match status" value="1"/>
</dbReference>
<dbReference type="FunFam" id="4.10.910.10:FF:000001">
    <property type="entry name" value="30S ribosomal protein S13"/>
    <property type="match status" value="1"/>
</dbReference>
<dbReference type="Gene3D" id="1.10.8.50">
    <property type="match status" value="1"/>
</dbReference>
<dbReference type="Gene3D" id="4.10.910.10">
    <property type="entry name" value="30s ribosomal protein s13, domain 2"/>
    <property type="match status" value="1"/>
</dbReference>
<dbReference type="HAMAP" id="MF_01315">
    <property type="entry name" value="Ribosomal_uS13"/>
    <property type="match status" value="1"/>
</dbReference>
<dbReference type="InterPro" id="IPR027437">
    <property type="entry name" value="Rbsml_uS13_C"/>
</dbReference>
<dbReference type="InterPro" id="IPR001892">
    <property type="entry name" value="Ribosomal_uS13"/>
</dbReference>
<dbReference type="InterPro" id="IPR010979">
    <property type="entry name" value="Ribosomal_uS13-like_H2TH"/>
</dbReference>
<dbReference type="InterPro" id="IPR019980">
    <property type="entry name" value="Ribosomal_uS13_bac-type"/>
</dbReference>
<dbReference type="InterPro" id="IPR018269">
    <property type="entry name" value="Ribosomal_uS13_CS"/>
</dbReference>
<dbReference type="NCBIfam" id="TIGR03631">
    <property type="entry name" value="uS13_bact"/>
    <property type="match status" value="1"/>
</dbReference>
<dbReference type="PANTHER" id="PTHR10871">
    <property type="entry name" value="30S RIBOSOMAL PROTEIN S13/40S RIBOSOMAL PROTEIN S18"/>
    <property type="match status" value="1"/>
</dbReference>
<dbReference type="PANTHER" id="PTHR10871:SF1">
    <property type="entry name" value="SMALL RIBOSOMAL SUBUNIT PROTEIN US13M"/>
    <property type="match status" value="1"/>
</dbReference>
<dbReference type="Pfam" id="PF00416">
    <property type="entry name" value="Ribosomal_S13"/>
    <property type="match status" value="1"/>
</dbReference>
<dbReference type="PIRSF" id="PIRSF002134">
    <property type="entry name" value="Ribosomal_S13"/>
    <property type="match status" value="1"/>
</dbReference>
<dbReference type="SUPFAM" id="SSF46946">
    <property type="entry name" value="S13-like H2TH domain"/>
    <property type="match status" value="1"/>
</dbReference>
<dbReference type="PROSITE" id="PS00646">
    <property type="entry name" value="RIBOSOMAL_S13_1"/>
    <property type="match status" value="1"/>
</dbReference>
<dbReference type="PROSITE" id="PS50159">
    <property type="entry name" value="RIBOSOMAL_S13_2"/>
    <property type="match status" value="1"/>
</dbReference>
<name>RR13_CYAM1</name>
<evidence type="ECO:0000255" key="1">
    <source>
        <dbReference type="HAMAP-Rule" id="MF_01315"/>
    </source>
</evidence>
<evidence type="ECO:0000256" key="2">
    <source>
        <dbReference type="SAM" id="MobiDB-lite"/>
    </source>
</evidence>
<evidence type="ECO:0000305" key="3"/>
<keyword id="KW-0150">Chloroplast</keyword>
<keyword id="KW-0934">Plastid</keyword>
<keyword id="KW-1185">Reference proteome</keyword>
<keyword id="KW-0687">Ribonucleoprotein</keyword>
<keyword id="KW-0689">Ribosomal protein</keyword>
<keyword id="KW-0694">RNA-binding</keyword>
<keyword id="KW-0699">rRNA-binding</keyword>
<accession>P59758</accession>
<gene>
    <name evidence="1" type="primary">rps13</name>
</gene>
<protein>
    <recommendedName>
        <fullName evidence="1">Small ribosomal subunit protein uS13c</fullName>
    </recommendedName>
    <alternativeName>
        <fullName evidence="3">30S ribosomal protein S13, chloroplastic</fullName>
    </alternativeName>
</protein>
<geneLocation type="chloroplast"/>
<proteinExistence type="inferred from homology"/>